<keyword id="KW-0378">Hydrolase</keyword>
<keyword id="KW-0904">Protein phosphatase</keyword>
<reference key="1">
    <citation type="journal article" date="1991" name="Immunogenetics">
        <title>Protein tyrosine phosphatase domains from the protochordate Styela plicata.</title>
        <authorList>
            <person name="Matthews R.J."/>
            <person name="Flores E."/>
            <person name="Thomas M.L."/>
        </authorList>
    </citation>
    <scope>NUCLEOTIDE SEQUENCE [MRNA]</scope>
</reference>
<gene>
    <name type="primary">STY-18</name>
</gene>
<accession>P28210</accession>
<comment type="catalytic activity">
    <reaction evidence="3">
        <text>O-phospho-L-tyrosyl-[protein] + H2O = L-tyrosyl-[protein] + phosphate</text>
        <dbReference type="Rhea" id="RHEA:10684"/>
        <dbReference type="Rhea" id="RHEA-COMP:10136"/>
        <dbReference type="Rhea" id="RHEA-COMP:20101"/>
        <dbReference type="ChEBI" id="CHEBI:15377"/>
        <dbReference type="ChEBI" id="CHEBI:43474"/>
        <dbReference type="ChEBI" id="CHEBI:46858"/>
        <dbReference type="ChEBI" id="CHEBI:61978"/>
        <dbReference type="EC" id="3.1.3.48"/>
    </reaction>
</comment>
<comment type="similarity">
    <text evidence="4">Belongs to the protein-tyrosine phosphatase family.</text>
</comment>
<organism>
    <name type="scientific">Styela plicata</name>
    <name type="common">Wrinkled sea squirt</name>
    <name type="synonym">Ascidia plicata</name>
    <dbReference type="NCBI Taxonomy" id="7726"/>
    <lineage>
        <taxon>Eukaryota</taxon>
        <taxon>Metazoa</taxon>
        <taxon>Chordata</taxon>
        <taxon>Tunicata</taxon>
        <taxon>Ascidiacea</taxon>
        <taxon>Stolidobranchia</taxon>
        <taxon>Styelidae</taxon>
        <taxon>Styela</taxon>
    </lineage>
</organism>
<protein>
    <recommendedName>
        <fullName>Tyrosine-protein phosphatase 18</fullName>
        <ecNumber>3.1.3.48</ecNumber>
    </recommendedName>
</protein>
<feature type="chain" id="PRO_0000094906" description="Tyrosine-protein phosphatase 18">
    <location>
        <begin position="1" status="less than"/>
        <end position="115" status="greater than"/>
    </location>
</feature>
<feature type="domain" description="Tyrosine-protein phosphatase" evidence="2">
    <location>
        <begin position="1" status="less than"/>
        <end position="115" status="greater than"/>
    </location>
</feature>
<feature type="binding site" evidence="1">
    <location>
        <position position="83"/>
    </location>
    <ligand>
        <name>substrate</name>
    </ligand>
</feature>
<feature type="non-terminal residue">
    <location>
        <position position="1"/>
    </location>
</feature>
<feature type="non-terminal residue">
    <location>
        <position position="115"/>
    </location>
</feature>
<sequence>WLMIVEQKCRVIVMLAKCFEAGKKKCQKYWPDSKETKAFGRVTVFNAEEVKYCGFIRRRFRIESVDKVLSMEVFQYQYINWPDHSVPNTTSNLVRMHKYVIQCLEETGSDAPMVV</sequence>
<proteinExistence type="evidence at transcript level"/>
<evidence type="ECO:0000250" key="1"/>
<evidence type="ECO:0000255" key="2">
    <source>
        <dbReference type="PROSITE-ProRule" id="PRU00160"/>
    </source>
</evidence>
<evidence type="ECO:0000255" key="3">
    <source>
        <dbReference type="PROSITE-ProRule" id="PRU10044"/>
    </source>
</evidence>
<evidence type="ECO:0000305" key="4"/>
<name>PTP18_STYPL</name>
<dbReference type="EC" id="3.1.3.48"/>
<dbReference type="EMBL" id="M38003">
    <property type="protein sequence ID" value="AAA29836.1"/>
    <property type="molecule type" value="mRNA"/>
</dbReference>
<dbReference type="SMR" id="P28210"/>
<dbReference type="GO" id="GO:0004725">
    <property type="term" value="F:protein tyrosine phosphatase activity"/>
    <property type="evidence" value="ECO:0007669"/>
    <property type="project" value="UniProtKB-EC"/>
</dbReference>
<dbReference type="CDD" id="cd00047">
    <property type="entry name" value="PTPc"/>
    <property type="match status" value="1"/>
</dbReference>
<dbReference type="Gene3D" id="3.90.190.10">
    <property type="entry name" value="Protein tyrosine phosphatase superfamily"/>
    <property type="match status" value="1"/>
</dbReference>
<dbReference type="InterPro" id="IPR029021">
    <property type="entry name" value="Prot-tyrosine_phosphatase-like"/>
</dbReference>
<dbReference type="InterPro" id="IPR050348">
    <property type="entry name" value="Protein-Tyr_Phosphatase"/>
</dbReference>
<dbReference type="InterPro" id="IPR000242">
    <property type="entry name" value="PTP_cat"/>
</dbReference>
<dbReference type="PANTHER" id="PTHR19134:SF562">
    <property type="entry name" value="PROTEIN-TYROSINE-PHOSPHATASE"/>
    <property type="match status" value="1"/>
</dbReference>
<dbReference type="PANTHER" id="PTHR19134">
    <property type="entry name" value="RECEPTOR-TYPE TYROSINE-PROTEIN PHOSPHATASE"/>
    <property type="match status" value="1"/>
</dbReference>
<dbReference type="Pfam" id="PF00102">
    <property type="entry name" value="Y_phosphatase"/>
    <property type="match status" value="1"/>
</dbReference>
<dbReference type="SUPFAM" id="SSF52799">
    <property type="entry name" value="(Phosphotyrosine protein) phosphatases II"/>
    <property type="match status" value="1"/>
</dbReference>
<dbReference type="PROSITE" id="PS50055">
    <property type="entry name" value="TYR_PHOSPHATASE_PTP"/>
    <property type="match status" value="1"/>
</dbReference>